<feature type="chain" id="PRO_0000392026" description="CDGSH iron-sulfur domain-containing protein 2 homolog">
    <location>
        <begin position="1"/>
        <end position="131"/>
    </location>
</feature>
<feature type="topological domain" description="Lumenal" evidence="3">
    <location>
        <begin position="1"/>
        <end position="35"/>
    </location>
</feature>
<feature type="transmembrane region" description="Helical" evidence="3">
    <location>
        <begin position="36"/>
        <end position="58"/>
    </location>
</feature>
<feature type="topological domain" description="Cytoplasmic" evidence="3">
    <location>
        <begin position="59"/>
        <end position="131"/>
    </location>
</feature>
<feature type="binding site" evidence="1">
    <location>
        <position position="97"/>
    </location>
    <ligand>
        <name>[2Fe-2S] cluster</name>
        <dbReference type="ChEBI" id="CHEBI:190135"/>
    </ligand>
</feature>
<feature type="binding site" evidence="1">
    <location>
        <position position="99"/>
    </location>
    <ligand>
        <name>[2Fe-2S] cluster</name>
        <dbReference type="ChEBI" id="CHEBI:190135"/>
    </ligand>
</feature>
<feature type="binding site" evidence="1">
    <location>
        <position position="108"/>
    </location>
    <ligand>
        <name>[2Fe-2S] cluster</name>
        <dbReference type="ChEBI" id="CHEBI:190135"/>
    </ligand>
</feature>
<feature type="binding site" evidence="1">
    <location>
        <position position="112"/>
    </location>
    <ligand>
        <name>[2Fe-2S] cluster</name>
        <dbReference type="ChEBI" id="CHEBI:190135"/>
    </ligand>
</feature>
<comment type="cofactor">
    <cofactor evidence="1">
        <name>[2Fe-2S] cluster</name>
        <dbReference type="ChEBI" id="CHEBI:190135"/>
    </cofactor>
    <text evidence="1">Binds 1 [2Fe-2S] cluster.</text>
</comment>
<comment type="subcellular location">
    <subcellularLocation>
        <location evidence="4">Endoplasmic reticulum membrane</location>
        <topology evidence="4">Single-pass membrane protein</topology>
    </subcellularLocation>
</comment>
<comment type="similarity">
    <text evidence="4">Belongs to the CISD protein family. CISD2 subfamily.</text>
</comment>
<keyword id="KW-0001">2Fe-2S</keyword>
<keyword id="KW-0256">Endoplasmic reticulum</keyword>
<keyword id="KW-0408">Iron</keyword>
<keyword id="KW-0411">Iron-sulfur</keyword>
<keyword id="KW-0472">Membrane</keyword>
<keyword id="KW-0479">Metal-binding</keyword>
<keyword id="KW-1185">Reference proteome</keyword>
<keyword id="KW-0812">Transmembrane</keyword>
<keyword id="KW-1133">Transmembrane helix</keyword>
<sequence length="131" mass="14462">MQSLSHAVKTSLPNYLSSLPVPDSVGGWFKLSFKDWLALIPPTAVVVGIGYISYQALCPAAQRKSCSGRCNDNIRKHEAKVVDMIDIENIADKAAFCRCWKTKNWPYCDGSHGEHNKNTGDNVGPVVIKRN</sequence>
<protein>
    <recommendedName>
        <fullName>CDGSH iron-sulfur domain-containing protein 2 homolog</fullName>
    </recommendedName>
</protein>
<evidence type="ECO:0000250" key="1"/>
<evidence type="ECO:0000250" key="2">
    <source>
        <dbReference type="UniProtKB" id="Q9VAM6"/>
    </source>
</evidence>
<evidence type="ECO:0000255" key="3"/>
<evidence type="ECO:0000305" key="4"/>
<accession>B4K5X8</accession>
<reference key="1">
    <citation type="journal article" date="2007" name="Nature">
        <title>Evolution of genes and genomes on the Drosophila phylogeny.</title>
        <authorList>
            <consortium name="Drosophila 12 genomes consortium"/>
        </authorList>
    </citation>
    <scope>NUCLEOTIDE SEQUENCE [LARGE SCALE GENOMIC DNA]</scope>
    <source>
        <strain>Tucson 15081-1352.22</strain>
    </source>
</reference>
<organism>
    <name type="scientific">Drosophila mojavensis</name>
    <name type="common">Fruit fly</name>
    <dbReference type="NCBI Taxonomy" id="7230"/>
    <lineage>
        <taxon>Eukaryota</taxon>
        <taxon>Metazoa</taxon>
        <taxon>Ecdysozoa</taxon>
        <taxon>Arthropoda</taxon>
        <taxon>Hexapoda</taxon>
        <taxon>Insecta</taxon>
        <taxon>Pterygota</taxon>
        <taxon>Neoptera</taxon>
        <taxon>Endopterygota</taxon>
        <taxon>Diptera</taxon>
        <taxon>Brachycera</taxon>
        <taxon>Muscomorpha</taxon>
        <taxon>Ephydroidea</taxon>
        <taxon>Drosophilidae</taxon>
        <taxon>Drosophila</taxon>
    </lineage>
</organism>
<proteinExistence type="inferred from homology"/>
<gene>
    <name evidence="2" type="primary">Cisd2</name>
    <name type="ORF">GI10402</name>
</gene>
<dbReference type="EMBL" id="CH933806">
    <property type="protein sequence ID" value="EDW16215.1"/>
    <property type="molecule type" value="Genomic_DNA"/>
</dbReference>
<dbReference type="SMR" id="B4K5X8"/>
<dbReference type="FunCoup" id="B4K5X8">
    <property type="interactions" value="1394"/>
</dbReference>
<dbReference type="EnsemblMetazoa" id="FBtr0161127">
    <property type="protein sequence ID" value="FBpp0159619"/>
    <property type="gene ID" value="FBgn0133166"/>
</dbReference>
<dbReference type="EnsemblMetazoa" id="XM_002000718.4">
    <property type="protein sequence ID" value="XP_002000754.1"/>
    <property type="gene ID" value="LOC6574724"/>
</dbReference>
<dbReference type="GeneID" id="6574724"/>
<dbReference type="KEGG" id="dmo:Dmoj_GI10402"/>
<dbReference type="CTD" id="493856"/>
<dbReference type="eggNOG" id="KOG3461">
    <property type="taxonomic scope" value="Eukaryota"/>
</dbReference>
<dbReference type="HOGENOM" id="CLU_132293_1_0_1"/>
<dbReference type="InParanoid" id="B4K5X8"/>
<dbReference type="OMA" id="QIRKHEP"/>
<dbReference type="OrthoDB" id="449252at2759"/>
<dbReference type="PhylomeDB" id="B4K5X8"/>
<dbReference type="Proteomes" id="UP000009192">
    <property type="component" value="Unassembled WGS sequence"/>
</dbReference>
<dbReference type="GO" id="GO:0005789">
    <property type="term" value="C:endoplasmic reticulum membrane"/>
    <property type="evidence" value="ECO:0007669"/>
    <property type="project" value="UniProtKB-SubCell"/>
</dbReference>
<dbReference type="GO" id="GO:0005741">
    <property type="term" value="C:mitochondrial outer membrane"/>
    <property type="evidence" value="ECO:0007669"/>
    <property type="project" value="EnsemblMetazoa"/>
</dbReference>
<dbReference type="GO" id="GO:0051537">
    <property type="term" value="F:2 iron, 2 sulfur cluster binding"/>
    <property type="evidence" value="ECO:0007669"/>
    <property type="project" value="UniProtKB-KW"/>
</dbReference>
<dbReference type="GO" id="GO:0046872">
    <property type="term" value="F:metal ion binding"/>
    <property type="evidence" value="ECO:0007669"/>
    <property type="project" value="UniProtKB-KW"/>
</dbReference>
<dbReference type="GO" id="GO:0006879">
    <property type="term" value="P:intracellular iron ion homeostasis"/>
    <property type="evidence" value="ECO:0007669"/>
    <property type="project" value="EnsemblMetazoa"/>
</dbReference>
<dbReference type="GO" id="GO:0006839">
    <property type="term" value="P:mitochondrial transport"/>
    <property type="evidence" value="ECO:0007669"/>
    <property type="project" value="EnsemblMetazoa"/>
</dbReference>
<dbReference type="GO" id="GO:0010506">
    <property type="term" value="P:regulation of autophagy"/>
    <property type="evidence" value="ECO:0007669"/>
    <property type="project" value="InterPro"/>
</dbReference>
<dbReference type="Gene3D" id="3.40.5.90">
    <property type="entry name" value="CDGSH iron-sulfur domain, mitoNEET-type"/>
    <property type="match status" value="1"/>
</dbReference>
<dbReference type="InterPro" id="IPR045131">
    <property type="entry name" value="CISD1/2"/>
</dbReference>
<dbReference type="InterPro" id="IPR018967">
    <property type="entry name" value="FeS-contain_CDGSH-typ"/>
</dbReference>
<dbReference type="InterPro" id="IPR019610">
    <property type="entry name" value="FeS-contain_mitoNEET_N"/>
</dbReference>
<dbReference type="InterPro" id="IPR042216">
    <property type="entry name" value="MitoNEET_CISD"/>
</dbReference>
<dbReference type="PANTHER" id="PTHR13680">
    <property type="entry name" value="CDGSH IRON-SULFUR DOMAIN-CONTAINING PROTEIN 1"/>
    <property type="match status" value="1"/>
</dbReference>
<dbReference type="PANTHER" id="PTHR13680:SF5">
    <property type="entry name" value="CDGSH IRON-SULFUR DOMAIN-CONTAINING PROTEIN 1"/>
    <property type="match status" value="1"/>
</dbReference>
<dbReference type="Pfam" id="PF10660">
    <property type="entry name" value="MitoNEET_N"/>
    <property type="match status" value="1"/>
</dbReference>
<dbReference type="Pfam" id="PF09360">
    <property type="entry name" value="zf-CDGSH"/>
    <property type="match status" value="1"/>
</dbReference>
<dbReference type="SMART" id="SM00704">
    <property type="entry name" value="ZnF_CDGSH"/>
    <property type="match status" value="1"/>
</dbReference>
<name>CISD2_DROMO</name>